<dbReference type="EMBL" id="AE016877">
    <property type="protein sequence ID" value="AAP08180.1"/>
    <property type="molecule type" value="Genomic_DNA"/>
</dbReference>
<dbReference type="RefSeq" id="NP_830979.1">
    <property type="nucleotide sequence ID" value="NC_004722.1"/>
</dbReference>
<dbReference type="RefSeq" id="WP_000360645.1">
    <property type="nucleotide sequence ID" value="NZ_CP138336.1"/>
</dbReference>
<dbReference type="SMR" id="Q813V3"/>
<dbReference type="STRING" id="226900.BC_1194"/>
<dbReference type="KEGG" id="bce:BC1194"/>
<dbReference type="PATRIC" id="fig|226900.8.peg.1162"/>
<dbReference type="HOGENOM" id="CLU_069785_0_0_9"/>
<dbReference type="OrthoDB" id="9813770at2"/>
<dbReference type="Proteomes" id="UP000001417">
    <property type="component" value="Chromosome"/>
</dbReference>
<dbReference type="GO" id="GO:0005737">
    <property type="term" value="C:cytoplasm"/>
    <property type="evidence" value="ECO:0007669"/>
    <property type="project" value="UniProtKB-SubCell"/>
</dbReference>
<dbReference type="CDD" id="cd03025">
    <property type="entry name" value="DsbA_FrnE_like"/>
    <property type="match status" value="1"/>
</dbReference>
<dbReference type="Gene3D" id="3.40.30.10">
    <property type="entry name" value="Glutaredoxin"/>
    <property type="match status" value="1"/>
</dbReference>
<dbReference type="Gene3D" id="1.10.472.60">
    <property type="entry name" value="putative protein disulfide isomerase domain"/>
    <property type="match status" value="1"/>
</dbReference>
<dbReference type="HAMAP" id="MF_02245">
    <property type="entry name" value="Adapter_SpxH"/>
    <property type="match status" value="1"/>
</dbReference>
<dbReference type="InterPro" id="IPR046404">
    <property type="entry name" value="Adapter_SpxH"/>
</dbReference>
<dbReference type="InterPro" id="IPR036249">
    <property type="entry name" value="Thioredoxin-like_sf"/>
</dbReference>
<dbReference type="PANTHER" id="PTHR13887:SF47">
    <property type="entry name" value="CLPXP ADAPTER PROTEIN SPXH"/>
    <property type="match status" value="1"/>
</dbReference>
<dbReference type="PANTHER" id="PTHR13887">
    <property type="entry name" value="GLUTATHIONE S-TRANSFERASE KAPPA"/>
    <property type="match status" value="1"/>
</dbReference>
<dbReference type="Pfam" id="PF13743">
    <property type="entry name" value="Thioredoxin_5"/>
    <property type="match status" value="1"/>
</dbReference>
<dbReference type="SUPFAM" id="SSF52833">
    <property type="entry name" value="Thioredoxin-like"/>
    <property type="match status" value="1"/>
</dbReference>
<proteinExistence type="inferred from homology"/>
<keyword id="KW-0963">Cytoplasm</keyword>
<keyword id="KW-1185">Reference proteome</keyword>
<accession>Q813V3</accession>
<name>SPXH_BACCR</name>
<evidence type="ECO:0000255" key="1">
    <source>
        <dbReference type="HAMAP-Rule" id="MF_02245"/>
    </source>
</evidence>
<protein>
    <recommendedName>
        <fullName evidence="1">ClpXP adapter protein SpxH</fullName>
    </recommendedName>
</protein>
<organism>
    <name type="scientific">Bacillus cereus (strain ATCC 14579 / DSM 31 / CCUG 7414 / JCM 2152 / NBRC 15305 / NCIMB 9373 / NCTC 2599 / NRRL B-3711)</name>
    <dbReference type="NCBI Taxonomy" id="226900"/>
    <lineage>
        <taxon>Bacteria</taxon>
        <taxon>Bacillati</taxon>
        <taxon>Bacillota</taxon>
        <taxon>Bacilli</taxon>
        <taxon>Bacillales</taxon>
        <taxon>Bacillaceae</taxon>
        <taxon>Bacillus</taxon>
        <taxon>Bacillus cereus group</taxon>
    </lineage>
</organism>
<gene>
    <name evidence="1" type="primary">spxH</name>
    <name type="ordered locus">BC_1194</name>
</gene>
<feature type="chain" id="PRO_0000278676" description="ClpXP adapter protein SpxH">
    <location>
        <begin position="1"/>
        <end position="297"/>
    </location>
</feature>
<reference key="1">
    <citation type="journal article" date="2003" name="Nature">
        <title>Genome sequence of Bacillus cereus and comparative analysis with Bacillus anthracis.</title>
        <authorList>
            <person name="Ivanova N."/>
            <person name="Sorokin A."/>
            <person name="Anderson I."/>
            <person name="Galleron N."/>
            <person name="Candelon B."/>
            <person name="Kapatral V."/>
            <person name="Bhattacharyya A."/>
            <person name="Reznik G."/>
            <person name="Mikhailova N."/>
            <person name="Lapidus A."/>
            <person name="Chu L."/>
            <person name="Mazur M."/>
            <person name="Goltsman E."/>
            <person name="Larsen N."/>
            <person name="D'Souza M."/>
            <person name="Walunas T."/>
            <person name="Grechkin Y."/>
            <person name="Pusch G."/>
            <person name="Haselkorn R."/>
            <person name="Fonstein M."/>
            <person name="Ehrlich S.D."/>
            <person name="Overbeek R."/>
            <person name="Kyrpides N.C."/>
        </authorList>
    </citation>
    <scope>NUCLEOTIDE SEQUENCE [LARGE SCALE GENOMIC DNA]</scope>
    <source>
        <strain>ATCC 14579 / DSM 31 / CCUG 7414 / JCM 2152 / NBRC 15305 / NCIMB 9373 / NCTC 2599 / NRRL B-3711</strain>
    </source>
</reference>
<sequence length="297" mass="34311">MDKQEAKHINMPSPSACEHKSVEAYLFIDPLCKDCWEIEPFIIKLWLEYGKYFSIRHIVTGKVDGTNASSHKWNKPANIRFVWEKTTSLQGFSCDGKVHMQEASSTPYLVSMAIKAAELQGRKAGSKFLRKLQEYIFLENVSNPDCELLLACAKDSNIDVEEFKKDLHSASAKKAFQCDLKFTNEMHITEIPSLVFFHANSDEEGIKIAGNYSYDVYVQLLKELVKCEIEPEPLPPLEVLLEATQFISSKEVAFIYDCPQQEIERELKKLQLKRKVQMIEVKCERYWKWIAKEKDLV</sequence>
<comment type="function">
    <text evidence="1">Adapter protein required for efficient degradation of Spx by ClpXP under non-stress conditions. Interaction with Spx stabilizes Spx and exposes the C-terminus of Spx for recognition and proteolysis by ClpXP.</text>
</comment>
<comment type="subunit">
    <text evidence="1">Interacts with Spx.</text>
</comment>
<comment type="subcellular location">
    <subcellularLocation>
        <location evidence="1">Cytoplasm</location>
    </subcellularLocation>
</comment>
<comment type="similarity">
    <text evidence="1">Belongs to the SpxH family.</text>
</comment>